<name>PLSX_BACC0</name>
<comment type="function">
    <text evidence="1">Catalyzes the reversible formation of acyl-phosphate (acyl-PO(4)) from acyl-[acyl-carrier-protein] (acyl-ACP). This enzyme utilizes acyl-ACP as fatty acyl donor, but not acyl-CoA.</text>
</comment>
<comment type="catalytic activity">
    <reaction evidence="1">
        <text>a fatty acyl-[ACP] + phosphate = an acyl phosphate + holo-[ACP]</text>
        <dbReference type="Rhea" id="RHEA:42292"/>
        <dbReference type="Rhea" id="RHEA-COMP:9685"/>
        <dbReference type="Rhea" id="RHEA-COMP:14125"/>
        <dbReference type="ChEBI" id="CHEBI:43474"/>
        <dbReference type="ChEBI" id="CHEBI:59918"/>
        <dbReference type="ChEBI" id="CHEBI:64479"/>
        <dbReference type="ChEBI" id="CHEBI:138651"/>
        <dbReference type="EC" id="2.3.1.274"/>
    </reaction>
</comment>
<comment type="pathway">
    <text evidence="1">Lipid metabolism; phospholipid metabolism.</text>
</comment>
<comment type="subunit">
    <text evidence="1">Homodimer. Probably interacts with PlsY.</text>
</comment>
<comment type="subcellular location">
    <subcellularLocation>
        <location evidence="1">Cytoplasm</location>
    </subcellularLocation>
    <text evidence="1">Associated with the membrane possibly through PlsY.</text>
</comment>
<comment type="similarity">
    <text evidence="1">Belongs to the PlsX family.</text>
</comment>
<reference key="1">
    <citation type="submission" date="2008-10" db="EMBL/GenBank/DDBJ databases">
        <title>Genome sequence of Bacillus cereus AH820.</title>
        <authorList>
            <person name="Dodson R.J."/>
            <person name="Durkin A.S."/>
            <person name="Rosovitz M.J."/>
            <person name="Rasko D.A."/>
            <person name="Hoffmaster A."/>
            <person name="Ravel J."/>
            <person name="Sutton G."/>
        </authorList>
    </citation>
    <scope>NUCLEOTIDE SEQUENCE [LARGE SCALE GENOMIC DNA]</scope>
    <source>
        <strain>AH820</strain>
    </source>
</reference>
<proteinExistence type="inferred from homology"/>
<keyword id="KW-0963">Cytoplasm</keyword>
<keyword id="KW-0444">Lipid biosynthesis</keyword>
<keyword id="KW-0443">Lipid metabolism</keyword>
<keyword id="KW-0594">Phospholipid biosynthesis</keyword>
<keyword id="KW-1208">Phospholipid metabolism</keyword>
<keyword id="KW-0808">Transferase</keyword>
<evidence type="ECO:0000255" key="1">
    <source>
        <dbReference type="HAMAP-Rule" id="MF_00019"/>
    </source>
</evidence>
<gene>
    <name evidence="1" type="primary">plsX</name>
    <name type="ordered locus">BCAH820_3867</name>
</gene>
<feature type="chain" id="PRO_1000116370" description="Phosphate acyltransferase">
    <location>
        <begin position="1"/>
        <end position="330"/>
    </location>
</feature>
<sequence>MKIAIDAMGGDHAPKAVVLGAMKAIKEYSDLHITLVGKEEEIRQYLTSEERITILHTDEKIESTDEPVRAVRRKKQASMVLAAQQVKDGVADACISAGSTGALMAAGLFVVGRMEGIERPALSPTMPTVDGEGFVMLDVGANVDAKPIHLYQYAVMGSVYAEKVRGIKNPRVGLLNVGTEDGKGNELSKQVFTMLKDAPINFVGNVESRDLLQGVADVVVCDGFTGNVALKSLEGTALALFSMLKEQLMSSFTSKLAAAVLKPKLMVLKDKMDYSEYGGAALFGLKAPVIKAHGSSNDQSIFSAIRQTREMVAKEVIPTISSVMEKEPLQ</sequence>
<organism>
    <name type="scientific">Bacillus cereus (strain AH820)</name>
    <dbReference type="NCBI Taxonomy" id="405535"/>
    <lineage>
        <taxon>Bacteria</taxon>
        <taxon>Bacillati</taxon>
        <taxon>Bacillota</taxon>
        <taxon>Bacilli</taxon>
        <taxon>Bacillales</taxon>
        <taxon>Bacillaceae</taxon>
        <taxon>Bacillus</taxon>
        <taxon>Bacillus cereus group</taxon>
    </lineage>
</organism>
<protein>
    <recommendedName>
        <fullName evidence="1">Phosphate acyltransferase</fullName>
        <ecNumber evidence="1">2.3.1.274</ecNumber>
    </recommendedName>
    <alternativeName>
        <fullName evidence="1">Acyl-ACP phosphotransacylase</fullName>
    </alternativeName>
    <alternativeName>
        <fullName evidence="1">Acyl-[acyl-carrier-protein]--phosphate acyltransferase</fullName>
    </alternativeName>
    <alternativeName>
        <fullName evidence="1">Phosphate-acyl-ACP acyltransferase</fullName>
    </alternativeName>
</protein>
<accession>B7JJU0</accession>
<dbReference type="EC" id="2.3.1.274" evidence="1"/>
<dbReference type="EMBL" id="CP001283">
    <property type="protein sequence ID" value="ACK88823.1"/>
    <property type="molecule type" value="Genomic_DNA"/>
</dbReference>
<dbReference type="RefSeq" id="WP_000684110.1">
    <property type="nucleotide sequence ID" value="NC_011773.1"/>
</dbReference>
<dbReference type="SMR" id="B7JJU0"/>
<dbReference type="KEGG" id="bcu:BCAH820_3867"/>
<dbReference type="HOGENOM" id="CLU_039379_1_1_9"/>
<dbReference type="UniPathway" id="UPA00085"/>
<dbReference type="Proteomes" id="UP000001363">
    <property type="component" value="Chromosome"/>
</dbReference>
<dbReference type="GO" id="GO:0005737">
    <property type="term" value="C:cytoplasm"/>
    <property type="evidence" value="ECO:0007669"/>
    <property type="project" value="UniProtKB-SubCell"/>
</dbReference>
<dbReference type="GO" id="GO:0043811">
    <property type="term" value="F:phosphate:acyl-[acyl carrier protein] acyltransferase activity"/>
    <property type="evidence" value="ECO:0007669"/>
    <property type="project" value="UniProtKB-UniRule"/>
</dbReference>
<dbReference type="GO" id="GO:0006633">
    <property type="term" value="P:fatty acid biosynthetic process"/>
    <property type="evidence" value="ECO:0007669"/>
    <property type="project" value="UniProtKB-UniRule"/>
</dbReference>
<dbReference type="GO" id="GO:0008654">
    <property type="term" value="P:phospholipid biosynthetic process"/>
    <property type="evidence" value="ECO:0007669"/>
    <property type="project" value="UniProtKB-KW"/>
</dbReference>
<dbReference type="Gene3D" id="3.40.718.10">
    <property type="entry name" value="Isopropylmalate Dehydrogenase"/>
    <property type="match status" value="1"/>
</dbReference>
<dbReference type="HAMAP" id="MF_00019">
    <property type="entry name" value="PlsX"/>
    <property type="match status" value="1"/>
</dbReference>
<dbReference type="InterPro" id="IPR003664">
    <property type="entry name" value="FA_synthesis"/>
</dbReference>
<dbReference type="InterPro" id="IPR012281">
    <property type="entry name" value="Phospholipid_synth_PlsX-like"/>
</dbReference>
<dbReference type="NCBIfam" id="TIGR00182">
    <property type="entry name" value="plsX"/>
    <property type="match status" value="1"/>
</dbReference>
<dbReference type="PANTHER" id="PTHR30100">
    <property type="entry name" value="FATTY ACID/PHOSPHOLIPID SYNTHESIS PROTEIN PLSX"/>
    <property type="match status" value="1"/>
</dbReference>
<dbReference type="PANTHER" id="PTHR30100:SF1">
    <property type="entry name" value="PHOSPHATE ACYLTRANSFERASE"/>
    <property type="match status" value="1"/>
</dbReference>
<dbReference type="Pfam" id="PF02504">
    <property type="entry name" value="FA_synthesis"/>
    <property type="match status" value="1"/>
</dbReference>
<dbReference type="PIRSF" id="PIRSF002465">
    <property type="entry name" value="Phsphlp_syn_PlsX"/>
    <property type="match status" value="1"/>
</dbReference>
<dbReference type="SUPFAM" id="SSF53659">
    <property type="entry name" value="Isocitrate/Isopropylmalate dehydrogenase-like"/>
    <property type="match status" value="1"/>
</dbReference>